<evidence type="ECO:0000255" key="1">
    <source>
        <dbReference type="HAMAP-Rule" id="MF_02083"/>
    </source>
</evidence>
<name>LYSY_PYRAB</name>
<keyword id="KW-0028">Amino-acid biosynthesis</keyword>
<keyword id="KW-0055">Arginine biosynthesis</keyword>
<keyword id="KW-0963">Cytoplasm</keyword>
<keyword id="KW-0457">Lysine biosynthesis</keyword>
<keyword id="KW-0521">NADP</keyword>
<keyword id="KW-0560">Oxidoreductase</keyword>
<reference key="1">
    <citation type="journal article" date="2003" name="Mol. Microbiol.">
        <title>An integrated analysis of the genome of the hyperthermophilic archaeon Pyrococcus abyssi.</title>
        <authorList>
            <person name="Cohen G.N."/>
            <person name="Barbe V."/>
            <person name="Flament D."/>
            <person name="Galperin M."/>
            <person name="Heilig R."/>
            <person name="Lecompte O."/>
            <person name="Poch O."/>
            <person name="Prieur D."/>
            <person name="Querellou J."/>
            <person name="Ripp R."/>
            <person name="Thierry J.-C."/>
            <person name="Van der Oost J."/>
            <person name="Weissenbach J."/>
            <person name="Zivanovic Y."/>
            <person name="Forterre P."/>
        </authorList>
    </citation>
    <scope>NUCLEOTIDE SEQUENCE [LARGE SCALE GENOMIC DNA]</scope>
    <source>
        <strain>GE5 / Orsay</strain>
    </source>
</reference>
<reference key="2">
    <citation type="journal article" date="2012" name="Curr. Microbiol.">
        <title>Re-annotation of two hyperthermophilic archaea Pyrococcus abyssi GE5 and Pyrococcus furiosus DSM 3638.</title>
        <authorList>
            <person name="Gao J."/>
            <person name="Wang J."/>
        </authorList>
    </citation>
    <scope>GENOME REANNOTATION</scope>
    <source>
        <strain>GE5 / Orsay</strain>
    </source>
</reference>
<gene>
    <name evidence="1" type="primary">lysY</name>
    <name type="synonym">argC</name>
    <name type="ordered locus">PYRAB04410</name>
    <name type="ORF">PAB0291</name>
</gene>
<dbReference type="EC" id="1.2.1.103" evidence="1"/>
<dbReference type="EC" id="1.2.1.106" evidence="1"/>
<dbReference type="EMBL" id="AJ248284">
    <property type="protein sequence ID" value="CAB49363.1"/>
    <property type="molecule type" value="Genomic_DNA"/>
</dbReference>
<dbReference type="EMBL" id="HE613800">
    <property type="protein sequence ID" value="CCE69823.1"/>
    <property type="molecule type" value="Genomic_DNA"/>
</dbReference>
<dbReference type="PIR" id="D75160">
    <property type="entry name" value="D75160"/>
</dbReference>
<dbReference type="RefSeq" id="WP_010867564.1">
    <property type="nucleotide sequence ID" value="NC_000868.1"/>
</dbReference>
<dbReference type="SMR" id="Q9V1I6"/>
<dbReference type="STRING" id="272844.PAB0291"/>
<dbReference type="KEGG" id="pab:PAB0291"/>
<dbReference type="PATRIC" id="fig|272844.11.peg.467"/>
<dbReference type="eggNOG" id="arCOG00495">
    <property type="taxonomic scope" value="Archaea"/>
</dbReference>
<dbReference type="HOGENOM" id="CLU_006384_0_1_2"/>
<dbReference type="OrthoDB" id="372053at2157"/>
<dbReference type="PhylomeDB" id="Q9V1I6"/>
<dbReference type="UniPathway" id="UPA00033">
    <property type="reaction ID" value="UER00037"/>
</dbReference>
<dbReference type="UniPathway" id="UPA00068"/>
<dbReference type="Proteomes" id="UP000000810">
    <property type="component" value="Chromosome"/>
</dbReference>
<dbReference type="Proteomes" id="UP000009139">
    <property type="component" value="Chromosome"/>
</dbReference>
<dbReference type="GO" id="GO:0005737">
    <property type="term" value="C:cytoplasm"/>
    <property type="evidence" value="ECO:0007669"/>
    <property type="project" value="UniProtKB-SubCell"/>
</dbReference>
<dbReference type="GO" id="GO:0043870">
    <property type="term" value="F:N-acetyl-gamma-aminoadipyl-phosphate reductase activity"/>
    <property type="evidence" value="ECO:0007669"/>
    <property type="project" value="RHEA"/>
</dbReference>
<dbReference type="GO" id="GO:0003942">
    <property type="term" value="F:N-acetyl-gamma-glutamyl-phosphate reductase activity"/>
    <property type="evidence" value="ECO:0007669"/>
    <property type="project" value="InterPro"/>
</dbReference>
<dbReference type="GO" id="GO:0051287">
    <property type="term" value="F:NAD binding"/>
    <property type="evidence" value="ECO:0007669"/>
    <property type="project" value="InterPro"/>
</dbReference>
<dbReference type="GO" id="GO:0070401">
    <property type="term" value="F:NADP+ binding"/>
    <property type="evidence" value="ECO:0007669"/>
    <property type="project" value="InterPro"/>
</dbReference>
<dbReference type="GO" id="GO:0042450">
    <property type="term" value="P:arginine biosynthetic process via ornithine"/>
    <property type="evidence" value="ECO:0007669"/>
    <property type="project" value="UniProtKB-UniRule"/>
</dbReference>
<dbReference type="GO" id="GO:0006526">
    <property type="term" value="P:L-arginine biosynthetic process"/>
    <property type="evidence" value="ECO:0007669"/>
    <property type="project" value="UniProtKB-UniPathway"/>
</dbReference>
<dbReference type="GO" id="GO:0019878">
    <property type="term" value="P:lysine biosynthetic process via aminoadipic acid"/>
    <property type="evidence" value="ECO:0007669"/>
    <property type="project" value="UniProtKB-UniRule"/>
</dbReference>
<dbReference type="CDD" id="cd23939">
    <property type="entry name" value="AGPR_1_C_LysY"/>
    <property type="match status" value="1"/>
</dbReference>
<dbReference type="CDD" id="cd17895">
    <property type="entry name" value="AGPR_1_N"/>
    <property type="match status" value="1"/>
</dbReference>
<dbReference type="Gene3D" id="3.30.360.10">
    <property type="entry name" value="Dihydrodipicolinate Reductase, domain 2"/>
    <property type="match status" value="1"/>
</dbReference>
<dbReference type="Gene3D" id="3.40.50.720">
    <property type="entry name" value="NAD(P)-binding Rossmann-like Domain"/>
    <property type="match status" value="1"/>
</dbReference>
<dbReference type="HAMAP" id="MF_00150">
    <property type="entry name" value="ArgC_type1"/>
    <property type="match status" value="1"/>
</dbReference>
<dbReference type="HAMAP" id="MF_02083">
    <property type="entry name" value="LysY"/>
    <property type="match status" value="1"/>
</dbReference>
<dbReference type="InterPro" id="IPR023013">
    <property type="entry name" value="AGPR_AS"/>
</dbReference>
<dbReference type="InterPro" id="IPR000706">
    <property type="entry name" value="AGPR_type-1"/>
</dbReference>
<dbReference type="InterPro" id="IPR037535">
    <property type="entry name" value="LysY"/>
</dbReference>
<dbReference type="InterPro" id="IPR036291">
    <property type="entry name" value="NAD(P)-bd_dom_sf"/>
</dbReference>
<dbReference type="InterPro" id="IPR050085">
    <property type="entry name" value="NAGSA_dehydrogenase"/>
</dbReference>
<dbReference type="InterPro" id="IPR000534">
    <property type="entry name" value="Semialdehyde_DH_NAD-bd"/>
</dbReference>
<dbReference type="NCBIfam" id="TIGR01850">
    <property type="entry name" value="argC"/>
    <property type="match status" value="1"/>
</dbReference>
<dbReference type="PANTHER" id="PTHR32338:SF11">
    <property type="entry name" value="[LYSW]-L-2-AMINOADIPATE_[LYSW]-L-GLUTAMATE PHOSPHATE REDUCTASE-RELATED"/>
    <property type="match status" value="1"/>
</dbReference>
<dbReference type="PANTHER" id="PTHR32338">
    <property type="entry name" value="N-ACETYL-GAMMA-GLUTAMYL-PHOSPHATE REDUCTASE, CHLOROPLASTIC-RELATED-RELATED"/>
    <property type="match status" value="1"/>
</dbReference>
<dbReference type="Pfam" id="PF01118">
    <property type="entry name" value="Semialdhyde_dh"/>
    <property type="match status" value="1"/>
</dbReference>
<dbReference type="Pfam" id="PF22698">
    <property type="entry name" value="Semialdhyde_dhC_1"/>
    <property type="match status" value="1"/>
</dbReference>
<dbReference type="SMART" id="SM00859">
    <property type="entry name" value="Semialdhyde_dh"/>
    <property type="match status" value="1"/>
</dbReference>
<dbReference type="SUPFAM" id="SSF55347">
    <property type="entry name" value="Glyceraldehyde-3-phosphate dehydrogenase-like, C-terminal domain"/>
    <property type="match status" value="1"/>
</dbReference>
<dbReference type="SUPFAM" id="SSF51735">
    <property type="entry name" value="NAD(P)-binding Rossmann-fold domains"/>
    <property type="match status" value="1"/>
</dbReference>
<dbReference type="PROSITE" id="PS01224">
    <property type="entry name" value="ARGC"/>
    <property type="match status" value="1"/>
</dbReference>
<comment type="function">
    <text evidence="1">Involved in both the arginine and lysine biosynthetic pathways.</text>
</comment>
<comment type="catalytic activity">
    <reaction evidence="1">
        <text>[amino-group carrier protein]-C-terminal-N-(1-carboxy-5-oxopentan-1-yl)-L-glutamine + phosphate + NADP(+) = [amino-group carrier protein]-C-terminal-N-(1-carboxy-5-phosphooxy-5-oxopentan-1-yl)-L-glutamine + NADPH + H(+)</text>
        <dbReference type="Rhea" id="RHEA:41948"/>
        <dbReference type="Rhea" id="RHEA-COMP:9712"/>
        <dbReference type="Rhea" id="RHEA-COMP:9714"/>
        <dbReference type="ChEBI" id="CHEBI:15378"/>
        <dbReference type="ChEBI" id="CHEBI:43474"/>
        <dbReference type="ChEBI" id="CHEBI:57783"/>
        <dbReference type="ChEBI" id="CHEBI:58349"/>
        <dbReference type="ChEBI" id="CHEBI:78499"/>
        <dbReference type="ChEBI" id="CHEBI:78501"/>
        <dbReference type="EC" id="1.2.1.103"/>
    </reaction>
</comment>
<comment type="catalytic activity">
    <reaction evidence="1">
        <text>[amino-group carrier protein]-C-terminal-gamma-(L-glutamyl-5-semialdehyde)-L-glutamate + phosphate + NADP(+) = [amino-group carrier protein]-C-terminal-gamma-(5-phospho-L-glutamyl)-L-glutamate + NADPH + H(+)</text>
        <dbReference type="Rhea" id="RHEA:52668"/>
        <dbReference type="Rhea" id="RHEA-COMP:13313"/>
        <dbReference type="Rhea" id="RHEA-COMP:13327"/>
        <dbReference type="ChEBI" id="CHEBI:15378"/>
        <dbReference type="ChEBI" id="CHEBI:43474"/>
        <dbReference type="ChEBI" id="CHEBI:57783"/>
        <dbReference type="ChEBI" id="CHEBI:58349"/>
        <dbReference type="ChEBI" id="CHEBI:136717"/>
        <dbReference type="ChEBI" id="CHEBI:136761"/>
        <dbReference type="EC" id="1.2.1.106"/>
    </reaction>
</comment>
<comment type="pathway">
    <text evidence="1">Amino-acid biosynthesis; L-lysine biosynthesis via AAA pathway; L-lysine from L-alpha-aminoadipate (Thermus route): step 3/5.</text>
</comment>
<comment type="pathway">
    <text evidence="1">Amino-acid biosynthesis; L-arginine biosynthesis.</text>
</comment>
<comment type="subcellular location">
    <subcellularLocation>
        <location evidence="1">Cytoplasm</location>
    </subcellularLocation>
</comment>
<comment type="similarity">
    <text evidence="1">Belongs to the NAGSA dehydrogenase family. Type 1 subfamily. LysY sub-subfamily.</text>
</comment>
<feature type="chain" id="PRO_0000112492" description="Putative [LysW]-L-2-aminoadipate/[LysW]-L-glutamate phosphate reductase">
    <location>
        <begin position="1"/>
        <end position="330"/>
    </location>
</feature>
<feature type="active site" evidence="1">
    <location>
        <position position="142"/>
    </location>
</feature>
<feature type="binding site" evidence="1">
    <location>
        <begin position="10"/>
        <end position="13"/>
    </location>
    <ligand>
        <name>NADP(+)</name>
        <dbReference type="ChEBI" id="CHEBI:58349"/>
    </ligand>
</feature>
<feature type="binding site" evidence="1">
    <location>
        <begin position="34"/>
        <end position="36"/>
    </location>
    <ligand>
        <name>NADP(+)</name>
        <dbReference type="ChEBI" id="CHEBI:58349"/>
    </ligand>
</feature>
<feature type="binding site" evidence="1">
    <location>
        <position position="297"/>
    </location>
    <ligand>
        <name>NADP(+)</name>
        <dbReference type="ChEBI" id="CHEBI:58349"/>
    </ligand>
</feature>
<protein>
    <recommendedName>
        <fullName evidence="1">Putative [LysW]-L-2-aminoadipate/[LysW]-L-glutamate phosphate reductase</fullName>
        <ecNumber evidence="1">1.2.1.103</ecNumber>
        <ecNumber evidence="1">1.2.1.106</ecNumber>
    </recommendedName>
</protein>
<proteinExistence type="inferred from homology"/>
<sequence length="330" mass="36962">MIKAAIVGGSGYIGGELIRLLSMHPEVEITTITSRKFAGKKVHKVHPNLRGLNLRFTDKYEFDADVIFLAVPHGTSMRIIGEFLGSAKIIDLSADFRVSKDLYEKYYGSHEKPELIDKFVYGLPELHRKEIKRAELVANPGCNATAVILALYPFRDVTSEAIVDLKVSSSAGGRRENVASIHPERSHVVRVYKPFHHRHEAEVLQETGVKAMFTVHSVDIVRGLLATTYFKFEGSEKDLLKRLLMYRGEPFIRLVTDKGGLQRYPDPKYVIGSNFVDIGFSYDSENSRAIVFSALDNLIKGGAGQAVQNMNIMFGFDETLGLNYYPLYPG</sequence>
<accession>Q9V1I6</accession>
<accession>G8ZGE4</accession>
<organism>
    <name type="scientific">Pyrococcus abyssi (strain GE5 / Orsay)</name>
    <dbReference type="NCBI Taxonomy" id="272844"/>
    <lineage>
        <taxon>Archaea</taxon>
        <taxon>Methanobacteriati</taxon>
        <taxon>Methanobacteriota</taxon>
        <taxon>Thermococci</taxon>
        <taxon>Thermococcales</taxon>
        <taxon>Thermococcaceae</taxon>
        <taxon>Pyrococcus</taxon>
    </lineage>
</organism>